<reference key="1">
    <citation type="journal article" date="1967" name="Arch. Biochem. Biophys.">
        <title>Amino acid sequence studies on artiodactyl fibrinopeptides. I. Dromedary camel, mule deer, and cape buffalo.</title>
        <authorList>
            <person name="Doolittle R.F."/>
            <person name="Schubert D."/>
            <person name="Schwartz S.A."/>
        </authorList>
    </citation>
    <scope>PROTEIN SEQUENCE</scope>
    <scope>PYROGLUTAMATE FORMATION AT GLN-1</scope>
    <scope>SULFATION AT TYR-6</scope>
</reference>
<comment type="function">
    <text evidence="1">Cleaved by the protease thrombin to yield monomers which, together with fibrinogen alpha (FGA) and fibrinogen gamma (FGG), polymerize to form an insoluble fibrin matrix. Fibrin has a major function in hemostasis as one of the primary components of blood clots. In addition, functions during the early stages of wound repair to stabilize the lesion and guide cell migration during re-epithelialization. Was originally thought to be essential for platelet aggregation, based on in vitro studies using anticoagulated blood. However subsequent studies have shown that it is not absolutely required for thrombus formation in vivo. Enhances expression of SELP in activated platelets. Maternal fibrinogen is essential for successful pregnancy. Fibrin deposition is also associated with infection, where it protects against IFNG-mediated hemorrhage. May also facilitate the antibacterial immune response via both innate and T-cell mediated pathways.</text>
</comment>
<comment type="subunit">
    <text evidence="2">Heterohexamer; disulfide linked. Contains 2 sets of 3 non-identical chains (alpha, beta and gamma). The 2 heterotrimers are in head to head conformation with the N-termini in a small central domain (By similarity).</text>
</comment>
<comment type="subcellular location">
    <subcellularLocation>
        <location>Secreted</location>
    </subcellularLocation>
</comment>
<comment type="domain">
    <text evidence="2">A long coiled coil structure formed by 3 polypeptide chains connects the central nodule to the C-terminal domains (distal nodules). The long C-terminal ends of the alpha chains fold back, contributing a fourth strand to the coiled coil structure.</text>
</comment>
<comment type="PTM">
    <text>Conversion of fibrinogen to fibrin is triggered by thrombin, which cleaves fibrinopeptides A and B from alpha and beta chains, and thus exposes the N-terminal polymerization sites responsible for the formation of the soft clot.</text>
</comment>
<gene>
    <name type="primary">FGB</name>
</gene>
<feature type="peptide" id="PRO_0000009088" description="Fibrinopeptide B">
    <location>
        <begin position="1"/>
        <end position="21"/>
    </location>
</feature>
<feature type="region of interest" description="Disordered" evidence="4">
    <location>
        <begin position="1"/>
        <end position="21"/>
    </location>
</feature>
<feature type="compositionally biased region" description="Acidic residues" evidence="4">
    <location>
        <begin position="1"/>
        <end position="11"/>
    </location>
</feature>
<feature type="modified residue" description="Pyrrolidone carboxylic acid" evidence="5">
    <location>
        <position position="1"/>
    </location>
</feature>
<feature type="modified residue" description="Sulfotyrosine" evidence="5">
    <location>
        <position position="6"/>
    </location>
</feature>
<feature type="glycosylation site" description="O-linked (GalNAc...) threonine" evidence="3">
    <location>
        <position position="4"/>
    </location>
</feature>
<feature type="non-terminal residue">
    <location>
        <position position="21"/>
    </location>
</feature>
<proteinExistence type="evidence at protein level"/>
<protein>
    <recommendedName>
        <fullName>Fibrinogen beta chain</fullName>
    </recommendedName>
    <component>
        <recommendedName>
            <fullName>Fibrinopeptide B</fullName>
        </recommendedName>
    </component>
</protein>
<keyword id="KW-1064">Adaptive immunity</keyword>
<keyword id="KW-0094">Blood coagulation</keyword>
<keyword id="KW-0175">Coiled coil</keyword>
<keyword id="KW-0903">Direct protein sequencing</keyword>
<keyword id="KW-1015">Disulfide bond</keyword>
<keyword id="KW-0325">Glycoprotein</keyword>
<keyword id="KW-0356">Hemostasis</keyword>
<keyword id="KW-0391">Immunity</keyword>
<keyword id="KW-0399">Innate immunity</keyword>
<keyword id="KW-0873">Pyrrolidone carboxylic acid</keyword>
<keyword id="KW-0964">Secreted</keyword>
<keyword id="KW-0765">Sulfation</keyword>
<dbReference type="GlyCosmos" id="P14481">
    <property type="glycosylation" value="1 site, No reported glycans"/>
</dbReference>
<dbReference type="GO" id="GO:0005576">
    <property type="term" value="C:extracellular region"/>
    <property type="evidence" value="ECO:0007669"/>
    <property type="project" value="UniProtKB-SubCell"/>
</dbReference>
<dbReference type="GO" id="GO:0002250">
    <property type="term" value="P:adaptive immune response"/>
    <property type="evidence" value="ECO:0007669"/>
    <property type="project" value="UniProtKB-KW"/>
</dbReference>
<dbReference type="GO" id="GO:0007596">
    <property type="term" value="P:blood coagulation"/>
    <property type="evidence" value="ECO:0007669"/>
    <property type="project" value="UniProtKB-KW"/>
</dbReference>
<dbReference type="GO" id="GO:0045087">
    <property type="term" value="P:innate immune response"/>
    <property type="evidence" value="ECO:0007669"/>
    <property type="project" value="UniProtKB-KW"/>
</dbReference>
<evidence type="ECO:0000250" key="1">
    <source>
        <dbReference type="UniProtKB" id="E9PV24"/>
    </source>
</evidence>
<evidence type="ECO:0000250" key="2">
    <source>
        <dbReference type="UniProtKB" id="P02675"/>
    </source>
</evidence>
<evidence type="ECO:0000250" key="3">
    <source>
        <dbReference type="UniProtKB" id="P02676"/>
    </source>
</evidence>
<evidence type="ECO:0000256" key="4">
    <source>
        <dbReference type="SAM" id="MobiDB-lite"/>
    </source>
</evidence>
<evidence type="ECO:0000269" key="5">
    <source>
    </source>
</evidence>
<organism>
    <name type="scientific">Syncerus caffer</name>
    <name type="common">African buffalo</name>
    <dbReference type="NCBI Taxonomy" id="9970"/>
    <lineage>
        <taxon>Eukaryota</taxon>
        <taxon>Metazoa</taxon>
        <taxon>Chordata</taxon>
        <taxon>Craniata</taxon>
        <taxon>Vertebrata</taxon>
        <taxon>Euteleostomi</taxon>
        <taxon>Mammalia</taxon>
        <taxon>Eutheria</taxon>
        <taxon>Laurasiatheria</taxon>
        <taxon>Artiodactyla</taxon>
        <taxon>Ruminantia</taxon>
        <taxon>Pecora</taxon>
        <taxon>Bovidae</taxon>
        <taxon>Bovinae</taxon>
        <taxon>Syncerus</taxon>
    </lineage>
</organism>
<sequence>QFPTDYDEGEDDRPKSGLGAR</sequence>
<accession>P14481</accession>
<name>FIBB_SYNCA</name>